<evidence type="ECO:0000255" key="1">
    <source>
        <dbReference type="HAMAP-Rule" id="MF_00017"/>
    </source>
</evidence>
<comment type="function">
    <text evidence="1">May play a role in DNA repair. It seems to be involved in an RecBC-independent recombinational process of DNA repair. It may act with RecF and RecO.</text>
</comment>
<comment type="similarity">
    <text evidence="1">Belongs to the RecR family.</text>
</comment>
<reference key="1">
    <citation type="journal article" date="2007" name="Science">
        <title>Legumes symbioses: absence of nod genes in photosynthetic bradyrhizobia.</title>
        <authorList>
            <person name="Giraud E."/>
            <person name="Moulin L."/>
            <person name="Vallenet D."/>
            <person name="Barbe V."/>
            <person name="Cytryn E."/>
            <person name="Avarre J.-C."/>
            <person name="Jaubert M."/>
            <person name="Simon D."/>
            <person name="Cartieaux F."/>
            <person name="Prin Y."/>
            <person name="Bena G."/>
            <person name="Hannibal L."/>
            <person name="Fardoux J."/>
            <person name="Kojadinovic M."/>
            <person name="Vuillet L."/>
            <person name="Lajus A."/>
            <person name="Cruveiller S."/>
            <person name="Rouy Z."/>
            <person name="Mangenot S."/>
            <person name="Segurens B."/>
            <person name="Dossat C."/>
            <person name="Franck W.L."/>
            <person name="Chang W.-S."/>
            <person name="Saunders E."/>
            <person name="Bruce D."/>
            <person name="Richardson P."/>
            <person name="Normand P."/>
            <person name="Dreyfus B."/>
            <person name="Pignol D."/>
            <person name="Stacey G."/>
            <person name="Emerich D."/>
            <person name="Vermeglio A."/>
            <person name="Medigue C."/>
            <person name="Sadowsky M."/>
        </authorList>
    </citation>
    <scope>NUCLEOTIDE SEQUENCE [LARGE SCALE GENOMIC DNA]</scope>
    <source>
        <strain>BTAi1 / ATCC BAA-1182</strain>
    </source>
</reference>
<name>RECR_BRASB</name>
<organism>
    <name type="scientific">Bradyrhizobium sp. (strain BTAi1 / ATCC BAA-1182)</name>
    <dbReference type="NCBI Taxonomy" id="288000"/>
    <lineage>
        <taxon>Bacteria</taxon>
        <taxon>Pseudomonadati</taxon>
        <taxon>Pseudomonadota</taxon>
        <taxon>Alphaproteobacteria</taxon>
        <taxon>Hyphomicrobiales</taxon>
        <taxon>Nitrobacteraceae</taxon>
        <taxon>Bradyrhizobium</taxon>
    </lineage>
</organism>
<accession>A5ESR4</accession>
<feature type="chain" id="PRO_0000322864" description="Recombination protein RecR">
    <location>
        <begin position="1"/>
        <end position="199"/>
    </location>
</feature>
<feature type="domain" description="Toprim" evidence="1">
    <location>
        <begin position="81"/>
        <end position="176"/>
    </location>
</feature>
<feature type="zinc finger region" description="C4-type" evidence="1">
    <location>
        <begin position="58"/>
        <end position="73"/>
    </location>
</feature>
<sequence>MAVAGPEIERLIQLLARLPGLGPRSARRAALHLIKKREALMVPLASAMQVAIERIQVCKTCGNIDTQSPCTVCTDPRRDPAMIVVVADVADLWALERAKASNGRYHVLGGTLSPLDGVGPQDLTIDALVQRAHAPEVSEIILALNATVDGQTTAHYITDLLQEANVKVTRLAHGVPVGGELDYLDEGTLSAAMRQRTLF</sequence>
<dbReference type="EMBL" id="CP000494">
    <property type="protein sequence ID" value="ABQ39208.1"/>
    <property type="molecule type" value="Genomic_DNA"/>
</dbReference>
<dbReference type="RefSeq" id="WP_012047111.1">
    <property type="nucleotide sequence ID" value="NC_009485.1"/>
</dbReference>
<dbReference type="SMR" id="A5ESR4"/>
<dbReference type="STRING" id="288000.BBta_7344"/>
<dbReference type="KEGG" id="bbt:BBta_7344"/>
<dbReference type="eggNOG" id="COG0353">
    <property type="taxonomic scope" value="Bacteria"/>
</dbReference>
<dbReference type="HOGENOM" id="CLU_060739_1_1_5"/>
<dbReference type="OrthoDB" id="9802672at2"/>
<dbReference type="Proteomes" id="UP000000246">
    <property type="component" value="Chromosome"/>
</dbReference>
<dbReference type="GO" id="GO:0003677">
    <property type="term" value="F:DNA binding"/>
    <property type="evidence" value="ECO:0007669"/>
    <property type="project" value="UniProtKB-UniRule"/>
</dbReference>
<dbReference type="GO" id="GO:0008270">
    <property type="term" value="F:zinc ion binding"/>
    <property type="evidence" value="ECO:0007669"/>
    <property type="project" value="UniProtKB-KW"/>
</dbReference>
<dbReference type="GO" id="GO:0006310">
    <property type="term" value="P:DNA recombination"/>
    <property type="evidence" value="ECO:0007669"/>
    <property type="project" value="UniProtKB-UniRule"/>
</dbReference>
<dbReference type="GO" id="GO:0006281">
    <property type="term" value="P:DNA repair"/>
    <property type="evidence" value="ECO:0007669"/>
    <property type="project" value="UniProtKB-UniRule"/>
</dbReference>
<dbReference type="CDD" id="cd01025">
    <property type="entry name" value="TOPRIM_recR"/>
    <property type="match status" value="1"/>
</dbReference>
<dbReference type="Gene3D" id="3.40.1360.10">
    <property type="match status" value="1"/>
</dbReference>
<dbReference type="Gene3D" id="6.10.250.240">
    <property type="match status" value="1"/>
</dbReference>
<dbReference type="Gene3D" id="1.10.8.420">
    <property type="entry name" value="RecR Domain 1"/>
    <property type="match status" value="1"/>
</dbReference>
<dbReference type="HAMAP" id="MF_00017">
    <property type="entry name" value="RecR"/>
    <property type="match status" value="1"/>
</dbReference>
<dbReference type="InterPro" id="IPR000093">
    <property type="entry name" value="DNA_Rcmb_RecR"/>
</dbReference>
<dbReference type="InterPro" id="IPR023627">
    <property type="entry name" value="Rcmb_RecR"/>
</dbReference>
<dbReference type="InterPro" id="IPR015967">
    <property type="entry name" value="Rcmb_RecR_Znf"/>
</dbReference>
<dbReference type="InterPro" id="IPR006171">
    <property type="entry name" value="TOPRIM_dom"/>
</dbReference>
<dbReference type="InterPro" id="IPR034137">
    <property type="entry name" value="TOPRIM_RecR"/>
</dbReference>
<dbReference type="NCBIfam" id="TIGR00615">
    <property type="entry name" value="recR"/>
    <property type="match status" value="1"/>
</dbReference>
<dbReference type="PANTHER" id="PTHR30446">
    <property type="entry name" value="RECOMBINATION PROTEIN RECR"/>
    <property type="match status" value="1"/>
</dbReference>
<dbReference type="PANTHER" id="PTHR30446:SF0">
    <property type="entry name" value="RECOMBINATION PROTEIN RECR"/>
    <property type="match status" value="1"/>
</dbReference>
<dbReference type="Pfam" id="PF21175">
    <property type="entry name" value="RecR_C"/>
    <property type="match status" value="1"/>
</dbReference>
<dbReference type="Pfam" id="PF21176">
    <property type="entry name" value="RecR_HhH"/>
    <property type="match status" value="1"/>
</dbReference>
<dbReference type="Pfam" id="PF02132">
    <property type="entry name" value="RecR_ZnF"/>
    <property type="match status" value="1"/>
</dbReference>
<dbReference type="Pfam" id="PF13662">
    <property type="entry name" value="Toprim_4"/>
    <property type="match status" value="1"/>
</dbReference>
<dbReference type="SMART" id="SM00493">
    <property type="entry name" value="TOPRIM"/>
    <property type="match status" value="1"/>
</dbReference>
<dbReference type="SUPFAM" id="SSF111304">
    <property type="entry name" value="Recombination protein RecR"/>
    <property type="match status" value="1"/>
</dbReference>
<dbReference type="PROSITE" id="PS01300">
    <property type="entry name" value="RECR"/>
    <property type="match status" value="1"/>
</dbReference>
<dbReference type="PROSITE" id="PS50880">
    <property type="entry name" value="TOPRIM"/>
    <property type="match status" value="1"/>
</dbReference>
<proteinExistence type="inferred from homology"/>
<protein>
    <recommendedName>
        <fullName evidence="1">Recombination protein RecR</fullName>
    </recommendedName>
</protein>
<keyword id="KW-0227">DNA damage</keyword>
<keyword id="KW-0233">DNA recombination</keyword>
<keyword id="KW-0234">DNA repair</keyword>
<keyword id="KW-0479">Metal-binding</keyword>
<keyword id="KW-1185">Reference proteome</keyword>
<keyword id="KW-0862">Zinc</keyword>
<keyword id="KW-0863">Zinc-finger</keyword>
<gene>
    <name evidence="1" type="primary">recR</name>
    <name type="ordered locus">BBta_7344</name>
</gene>